<proteinExistence type="inferred from homology"/>
<evidence type="ECO:0000255" key="1">
    <source>
        <dbReference type="HAMAP-Rule" id="MF_00607"/>
    </source>
</evidence>
<evidence type="ECO:0000256" key="2">
    <source>
        <dbReference type="SAM" id="MobiDB-lite"/>
    </source>
</evidence>
<keyword id="KW-0963">Cytoplasm</keyword>
<keyword id="KW-0489">Methyltransferase</keyword>
<keyword id="KW-0694">RNA-binding</keyword>
<keyword id="KW-0698">rRNA processing</keyword>
<keyword id="KW-0949">S-adenosyl-L-methionine</keyword>
<keyword id="KW-0808">Transferase</keyword>
<organism>
    <name type="scientific">Parasynechococcus marenigrum (strain WH8102)</name>
    <dbReference type="NCBI Taxonomy" id="84588"/>
    <lineage>
        <taxon>Bacteria</taxon>
        <taxon>Bacillati</taxon>
        <taxon>Cyanobacteriota</taxon>
        <taxon>Cyanophyceae</taxon>
        <taxon>Synechococcales</taxon>
        <taxon>Prochlorococcaceae</taxon>
        <taxon>Parasynechococcus</taxon>
        <taxon>Parasynechococcus marenigrum</taxon>
    </lineage>
</organism>
<sequence>MAFQGHQARKRFGQHWLKDQTVLDRIVAAADLQPSDRVLEVGPGRGALTERLLSSPAAAVQAVELDRDLVDGLRERFAGDPRFSLRQGDVLELPLQLEDGVAASKVVANIPYNITGPLLDRLVGRLDRPVEPPYQRLVLLVQKQVAERIRARPGHSSFSALSVRMQLLARCTTVCPVPPRCFQPPPKVQSEVIQIDPLPADKRLPSDIARRVESLLRQAFLARRKMLRNTLASLAPEPQLQALAAAAGFQLHQRPQELAPQVWVALARGLNQGIDAASADGHDHGDGSGQGESSPGGARDQI</sequence>
<comment type="function">
    <text evidence="1">Specifically dimethylates two adjacent adenosines (A1518 and A1519) in the loop of a conserved hairpin near the 3'-end of 16S rRNA in the 30S particle. May play a critical role in biogenesis of 30S subunits.</text>
</comment>
<comment type="catalytic activity">
    <reaction evidence="1">
        <text>adenosine(1518)/adenosine(1519) in 16S rRNA + 4 S-adenosyl-L-methionine = N(6)-dimethyladenosine(1518)/N(6)-dimethyladenosine(1519) in 16S rRNA + 4 S-adenosyl-L-homocysteine + 4 H(+)</text>
        <dbReference type="Rhea" id="RHEA:19609"/>
        <dbReference type="Rhea" id="RHEA-COMP:10232"/>
        <dbReference type="Rhea" id="RHEA-COMP:10233"/>
        <dbReference type="ChEBI" id="CHEBI:15378"/>
        <dbReference type="ChEBI" id="CHEBI:57856"/>
        <dbReference type="ChEBI" id="CHEBI:59789"/>
        <dbReference type="ChEBI" id="CHEBI:74411"/>
        <dbReference type="ChEBI" id="CHEBI:74493"/>
        <dbReference type="EC" id="2.1.1.182"/>
    </reaction>
</comment>
<comment type="subcellular location">
    <subcellularLocation>
        <location evidence="1">Cytoplasm</location>
    </subcellularLocation>
</comment>
<comment type="similarity">
    <text evidence="1">Belongs to the class I-like SAM-binding methyltransferase superfamily. rRNA adenine N(6)-methyltransferase family. RsmA subfamily.</text>
</comment>
<accession>Q7U7D3</accession>
<dbReference type="EC" id="2.1.1.182" evidence="1"/>
<dbReference type="EMBL" id="BX569691">
    <property type="protein sequence ID" value="CAE07567.1"/>
    <property type="molecule type" value="Genomic_DNA"/>
</dbReference>
<dbReference type="RefSeq" id="WP_011127917.1">
    <property type="nucleotide sequence ID" value="NC_005070.1"/>
</dbReference>
<dbReference type="SMR" id="Q7U7D3"/>
<dbReference type="STRING" id="84588.SYNW1052"/>
<dbReference type="KEGG" id="syw:SYNW1052"/>
<dbReference type="eggNOG" id="COG0030">
    <property type="taxonomic scope" value="Bacteria"/>
</dbReference>
<dbReference type="HOGENOM" id="CLU_041220_0_1_3"/>
<dbReference type="Proteomes" id="UP000001422">
    <property type="component" value="Chromosome"/>
</dbReference>
<dbReference type="GO" id="GO:0005829">
    <property type="term" value="C:cytosol"/>
    <property type="evidence" value="ECO:0007669"/>
    <property type="project" value="TreeGrafter"/>
</dbReference>
<dbReference type="GO" id="GO:0052908">
    <property type="term" value="F:16S rRNA (adenine(1518)-N(6)/adenine(1519)-N(6))-dimethyltransferase activity"/>
    <property type="evidence" value="ECO:0007669"/>
    <property type="project" value="UniProtKB-EC"/>
</dbReference>
<dbReference type="GO" id="GO:0003723">
    <property type="term" value="F:RNA binding"/>
    <property type="evidence" value="ECO:0007669"/>
    <property type="project" value="UniProtKB-KW"/>
</dbReference>
<dbReference type="CDD" id="cd02440">
    <property type="entry name" value="AdoMet_MTases"/>
    <property type="match status" value="1"/>
</dbReference>
<dbReference type="Gene3D" id="1.10.8.100">
    <property type="entry name" value="Ribosomal RNA adenine dimethylase-like, domain 2"/>
    <property type="match status" value="1"/>
</dbReference>
<dbReference type="Gene3D" id="3.40.50.150">
    <property type="entry name" value="Vaccinia Virus protein VP39"/>
    <property type="match status" value="1"/>
</dbReference>
<dbReference type="HAMAP" id="MF_00607">
    <property type="entry name" value="16SrRNA_methyltr_A"/>
    <property type="match status" value="1"/>
</dbReference>
<dbReference type="InterPro" id="IPR001737">
    <property type="entry name" value="KsgA/Erm"/>
</dbReference>
<dbReference type="InterPro" id="IPR023165">
    <property type="entry name" value="rRNA_Ade_diMease-like_C"/>
</dbReference>
<dbReference type="InterPro" id="IPR020596">
    <property type="entry name" value="rRNA_Ade_Mease_Trfase_CS"/>
</dbReference>
<dbReference type="InterPro" id="IPR020598">
    <property type="entry name" value="rRNA_Ade_methylase_Trfase_N"/>
</dbReference>
<dbReference type="InterPro" id="IPR011530">
    <property type="entry name" value="rRNA_adenine_dimethylase"/>
</dbReference>
<dbReference type="InterPro" id="IPR029063">
    <property type="entry name" value="SAM-dependent_MTases_sf"/>
</dbReference>
<dbReference type="NCBIfam" id="TIGR00755">
    <property type="entry name" value="ksgA"/>
    <property type="match status" value="1"/>
</dbReference>
<dbReference type="PANTHER" id="PTHR11727">
    <property type="entry name" value="DIMETHYLADENOSINE TRANSFERASE"/>
    <property type="match status" value="1"/>
</dbReference>
<dbReference type="PANTHER" id="PTHR11727:SF7">
    <property type="entry name" value="DIMETHYLADENOSINE TRANSFERASE-RELATED"/>
    <property type="match status" value="1"/>
</dbReference>
<dbReference type="Pfam" id="PF00398">
    <property type="entry name" value="RrnaAD"/>
    <property type="match status" value="1"/>
</dbReference>
<dbReference type="SMART" id="SM00650">
    <property type="entry name" value="rADc"/>
    <property type="match status" value="1"/>
</dbReference>
<dbReference type="SUPFAM" id="SSF53335">
    <property type="entry name" value="S-adenosyl-L-methionine-dependent methyltransferases"/>
    <property type="match status" value="1"/>
</dbReference>
<dbReference type="PROSITE" id="PS01131">
    <property type="entry name" value="RRNA_A_DIMETH"/>
    <property type="match status" value="1"/>
</dbReference>
<dbReference type="PROSITE" id="PS51689">
    <property type="entry name" value="SAM_RNA_A_N6_MT"/>
    <property type="match status" value="1"/>
</dbReference>
<protein>
    <recommendedName>
        <fullName evidence="1">Ribosomal RNA small subunit methyltransferase A</fullName>
        <ecNumber evidence="1">2.1.1.182</ecNumber>
    </recommendedName>
    <alternativeName>
        <fullName evidence="1">16S rRNA (adenine(1518)-N(6)/adenine(1519)-N(6))-dimethyltransferase</fullName>
    </alternativeName>
    <alternativeName>
        <fullName evidence="1">16S rRNA dimethyladenosine transferase</fullName>
    </alternativeName>
    <alternativeName>
        <fullName evidence="1">16S rRNA dimethylase</fullName>
    </alternativeName>
    <alternativeName>
        <fullName evidence="1">S-adenosylmethionine-6-N', N'-adenosyl(rRNA) dimethyltransferase</fullName>
    </alternativeName>
</protein>
<feature type="chain" id="PRO_0000101627" description="Ribosomal RNA small subunit methyltransferase A">
    <location>
        <begin position="1"/>
        <end position="302"/>
    </location>
</feature>
<feature type="region of interest" description="Disordered" evidence="2">
    <location>
        <begin position="275"/>
        <end position="302"/>
    </location>
</feature>
<feature type="binding site" evidence="1">
    <location>
        <position position="15"/>
    </location>
    <ligand>
        <name>S-adenosyl-L-methionine</name>
        <dbReference type="ChEBI" id="CHEBI:59789"/>
    </ligand>
</feature>
<feature type="binding site" evidence="1">
    <location>
        <position position="17"/>
    </location>
    <ligand>
        <name>S-adenosyl-L-methionine</name>
        <dbReference type="ChEBI" id="CHEBI:59789"/>
    </ligand>
</feature>
<feature type="binding site" evidence="1">
    <location>
        <position position="42"/>
    </location>
    <ligand>
        <name>S-adenosyl-L-methionine</name>
        <dbReference type="ChEBI" id="CHEBI:59789"/>
    </ligand>
</feature>
<feature type="binding site" evidence="1">
    <location>
        <position position="64"/>
    </location>
    <ligand>
        <name>S-adenosyl-L-methionine</name>
        <dbReference type="ChEBI" id="CHEBI:59789"/>
    </ligand>
</feature>
<feature type="binding site" evidence="1">
    <location>
        <position position="89"/>
    </location>
    <ligand>
        <name>S-adenosyl-L-methionine</name>
        <dbReference type="ChEBI" id="CHEBI:59789"/>
    </ligand>
</feature>
<feature type="binding site" evidence="1">
    <location>
        <position position="109"/>
    </location>
    <ligand>
        <name>S-adenosyl-L-methionine</name>
        <dbReference type="ChEBI" id="CHEBI:59789"/>
    </ligand>
</feature>
<gene>
    <name evidence="1" type="primary">rsmA</name>
    <name evidence="1" type="synonym">ksgA</name>
    <name type="ordered locus">SYNW1052</name>
</gene>
<reference key="1">
    <citation type="journal article" date="2003" name="Nature">
        <title>The genome of a motile marine Synechococcus.</title>
        <authorList>
            <person name="Palenik B."/>
            <person name="Brahamsha B."/>
            <person name="Larimer F.W."/>
            <person name="Land M.L."/>
            <person name="Hauser L."/>
            <person name="Chain P."/>
            <person name="Lamerdin J.E."/>
            <person name="Regala W."/>
            <person name="Allen E.E."/>
            <person name="McCarren J."/>
            <person name="Paulsen I.T."/>
            <person name="Dufresne A."/>
            <person name="Partensky F."/>
            <person name="Webb E.A."/>
            <person name="Waterbury J."/>
        </authorList>
    </citation>
    <scope>NUCLEOTIDE SEQUENCE [LARGE SCALE GENOMIC DNA]</scope>
    <source>
        <strain>WH8102</strain>
    </source>
</reference>
<name>RSMA_PARMW</name>